<organism>
    <name type="scientific">Hyphomonas neptunium (strain ATCC 15444)</name>
    <dbReference type="NCBI Taxonomy" id="228405"/>
    <lineage>
        <taxon>Bacteria</taxon>
        <taxon>Pseudomonadati</taxon>
        <taxon>Pseudomonadota</taxon>
        <taxon>Alphaproteobacteria</taxon>
        <taxon>Hyphomonadales</taxon>
        <taxon>Hyphomonadaceae</taxon>
        <taxon>Hyphomonas</taxon>
    </lineage>
</organism>
<evidence type="ECO:0000255" key="1">
    <source>
        <dbReference type="HAMAP-Rule" id="MF_00052"/>
    </source>
</evidence>
<evidence type="ECO:0000255" key="2">
    <source>
        <dbReference type="PROSITE-ProRule" id="PRU01319"/>
    </source>
</evidence>
<accession>Q0BYK9</accession>
<name>RNH2_HYPNA</name>
<dbReference type="EC" id="3.1.26.4" evidence="1"/>
<dbReference type="EMBL" id="CP000158">
    <property type="protein sequence ID" value="ABI75371.1"/>
    <property type="molecule type" value="Genomic_DNA"/>
</dbReference>
<dbReference type="RefSeq" id="WP_011647731.1">
    <property type="nucleotide sequence ID" value="NC_008358.1"/>
</dbReference>
<dbReference type="SMR" id="Q0BYK9"/>
<dbReference type="STRING" id="228405.HNE_2755"/>
<dbReference type="KEGG" id="hne:HNE_2755"/>
<dbReference type="eggNOG" id="COG0164">
    <property type="taxonomic scope" value="Bacteria"/>
</dbReference>
<dbReference type="HOGENOM" id="CLU_036532_3_2_5"/>
<dbReference type="Proteomes" id="UP000001959">
    <property type="component" value="Chromosome"/>
</dbReference>
<dbReference type="GO" id="GO:0005737">
    <property type="term" value="C:cytoplasm"/>
    <property type="evidence" value="ECO:0007669"/>
    <property type="project" value="UniProtKB-SubCell"/>
</dbReference>
<dbReference type="GO" id="GO:0032299">
    <property type="term" value="C:ribonuclease H2 complex"/>
    <property type="evidence" value="ECO:0007669"/>
    <property type="project" value="TreeGrafter"/>
</dbReference>
<dbReference type="GO" id="GO:0030145">
    <property type="term" value="F:manganese ion binding"/>
    <property type="evidence" value="ECO:0007669"/>
    <property type="project" value="UniProtKB-UniRule"/>
</dbReference>
<dbReference type="GO" id="GO:0003723">
    <property type="term" value="F:RNA binding"/>
    <property type="evidence" value="ECO:0007669"/>
    <property type="project" value="InterPro"/>
</dbReference>
<dbReference type="GO" id="GO:0004523">
    <property type="term" value="F:RNA-DNA hybrid ribonuclease activity"/>
    <property type="evidence" value="ECO:0007669"/>
    <property type="project" value="UniProtKB-UniRule"/>
</dbReference>
<dbReference type="GO" id="GO:0043137">
    <property type="term" value="P:DNA replication, removal of RNA primer"/>
    <property type="evidence" value="ECO:0007669"/>
    <property type="project" value="TreeGrafter"/>
</dbReference>
<dbReference type="GO" id="GO:0006298">
    <property type="term" value="P:mismatch repair"/>
    <property type="evidence" value="ECO:0007669"/>
    <property type="project" value="TreeGrafter"/>
</dbReference>
<dbReference type="CDD" id="cd07182">
    <property type="entry name" value="RNase_HII_bacteria_HII_like"/>
    <property type="match status" value="1"/>
</dbReference>
<dbReference type="Gene3D" id="3.30.420.10">
    <property type="entry name" value="Ribonuclease H-like superfamily/Ribonuclease H"/>
    <property type="match status" value="1"/>
</dbReference>
<dbReference type="HAMAP" id="MF_00052_B">
    <property type="entry name" value="RNase_HII_B"/>
    <property type="match status" value="1"/>
</dbReference>
<dbReference type="InterPro" id="IPR022898">
    <property type="entry name" value="RNase_HII"/>
</dbReference>
<dbReference type="InterPro" id="IPR001352">
    <property type="entry name" value="RNase_HII/HIII"/>
</dbReference>
<dbReference type="InterPro" id="IPR024567">
    <property type="entry name" value="RNase_HII/HIII_dom"/>
</dbReference>
<dbReference type="InterPro" id="IPR012337">
    <property type="entry name" value="RNaseH-like_sf"/>
</dbReference>
<dbReference type="InterPro" id="IPR036397">
    <property type="entry name" value="RNaseH_sf"/>
</dbReference>
<dbReference type="NCBIfam" id="NF000595">
    <property type="entry name" value="PRK00015.1-3"/>
    <property type="match status" value="1"/>
</dbReference>
<dbReference type="PANTHER" id="PTHR10954">
    <property type="entry name" value="RIBONUCLEASE H2 SUBUNIT A"/>
    <property type="match status" value="1"/>
</dbReference>
<dbReference type="PANTHER" id="PTHR10954:SF18">
    <property type="entry name" value="RIBONUCLEASE HII"/>
    <property type="match status" value="1"/>
</dbReference>
<dbReference type="Pfam" id="PF01351">
    <property type="entry name" value="RNase_HII"/>
    <property type="match status" value="1"/>
</dbReference>
<dbReference type="SUPFAM" id="SSF53098">
    <property type="entry name" value="Ribonuclease H-like"/>
    <property type="match status" value="1"/>
</dbReference>
<dbReference type="PROSITE" id="PS51975">
    <property type="entry name" value="RNASE_H_2"/>
    <property type="match status" value="1"/>
</dbReference>
<comment type="function">
    <text evidence="1">Endonuclease that specifically degrades the RNA of RNA-DNA hybrids.</text>
</comment>
<comment type="catalytic activity">
    <reaction evidence="1">
        <text>Endonucleolytic cleavage to 5'-phosphomonoester.</text>
        <dbReference type="EC" id="3.1.26.4"/>
    </reaction>
</comment>
<comment type="cofactor">
    <cofactor evidence="1">
        <name>Mn(2+)</name>
        <dbReference type="ChEBI" id="CHEBI:29035"/>
    </cofactor>
    <cofactor evidence="1">
        <name>Mg(2+)</name>
        <dbReference type="ChEBI" id="CHEBI:18420"/>
    </cofactor>
    <text evidence="1">Manganese or magnesium. Binds 1 divalent metal ion per monomer in the absence of substrate. May bind a second metal ion after substrate binding.</text>
</comment>
<comment type="subcellular location">
    <subcellularLocation>
        <location evidence="1">Cytoplasm</location>
    </subcellularLocation>
</comment>
<comment type="similarity">
    <text evidence="1">Belongs to the RNase HII family.</text>
</comment>
<keyword id="KW-0963">Cytoplasm</keyword>
<keyword id="KW-0255">Endonuclease</keyword>
<keyword id="KW-0378">Hydrolase</keyword>
<keyword id="KW-0464">Manganese</keyword>
<keyword id="KW-0479">Metal-binding</keyword>
<keyword id="KW-0540">Nuclease</keyword>
<keyword id="KW-1185">Reference proteome</keyword>
<feature type="chain" id="PRO_0000334907" description="Ribonuclease HII">
    <location>
        <begin position="1"/>
        <end position="207"/>
    </location>
</feature>
<feature type="domain" description="RNase H type-2" evidence="2">
    <location>
        <begin position="5"/>
        <end position="207"/>
    </location>
</feature>
<feature type="binding site" evidence="1">
    <location>
        <position position="11"/>
    </location>
    <ligand>
        <name>a divalent metal cation</name>
        <dbReference type="ChEBI" id="CHEBI:60240"/>
    </ligand>
</feature>
<feature type="binding site" evidence="1">
    <location>
        <position position="12"/>
    </location>
    <ligand>
        <name>a divalent metal cation</name>
        <dbReference type="ChEBI" id="CHEBI:60240"/>
    </ligand>
</feature>
<feature type="binding site" evidence="1">
    <location>
        <position position="117"/>
    </location>
    <ligand>
        <name>a divalent metal cation</name>
        <dbReference type="ChEBI" id="CHEBI:60240"/>
    </ligand>
</feature>
<proteinExistence type="inferred from homology"/>
<reference key="1">
    <citation type="journal article" date="2006" name="J. Bacteriol.">
        <title>Comparative genomic evidence for a close relationship between the dimorphic prosthecate bacteria Hyphomonas neptunium and Caulobacter crescentus.</title>
        <authorList>
            <person name="Badger J.H."/>
            <person name="Hoover T.R."/>
            <person name="Brun Y.V."/>
            <person name="Weiner R.M."/>
            <person name="Laub M.T."/>
            <person name="Alexandre G."/>
            <person name="Mrazek J."/>
            <person name="Ren Q."/>
            <person name="Paulsen I.T."/>
            <person name="Nelson K.E."/>
            <person name="Khouri H.M."/>
            <person name="Radune D."/>
            <person name="Sosa J."/>
            <person name="Dodson R.J."/>
            <person name="Sullivan S.A."/>
            <person name="Rosovitz M.J."/>
            <person name="Madupu R."/>
            <person name="Brinkac L.M."/>
            <person name="Durkin A.S."/>
            <person name="Daugherty S.C."/>
            <person name="Kothari S.P."/>
            <person name="Giglio M.G."/>
            <person name="Zhou L."/>
            <person name="Haft D.H."/>
            <person name="Selengut J.D."/>
            <person name="Davidsen T.M."/>
            <person name="Yang Q."/>
            <person name="Zafar N."/>
            <person name="Ward N.L."/>
        </authorList>
    </citation>
    <scope>NUCLEOTIDE SEQUENCE [LARGE SCALE GENOMIC DNA]</scope>
    <source>
        <strain>ATCC 15444</strain>
    </source>
</reference>
<gene>
    <name evidence="1" type="primary">rnhB</name>
    <name type="ordered locus">HNE_2755</name>
</gene>
<sequence>MSAFPLIIGVDEAGRGPWAGPVTAAAVILDPAQPIEGLTDSKKLSEKARDRLAPLIRERALAWCVAEASVEEIDTLNIRQATFLAMRRAILGQSRTDQDRSGQFETVSATAGLILIDGNALPGDLPAPARAIIKGDLTEPAISAASILAKTHRDAQMASLCNLYPGYGFSGHKGYGTAAHAAALTRLGPCPVHRQSFAPVRALLRPC</sequence>
<protein>
    <recommendedName>
        <fullName evidence="1">Ribonuclease HII</fullName>
        <shortName evidence="1">RNase HII</shortName>
        <ecNumber evidence="1">3.1.26.4</ecNumber>
    </recommendedName>
</protein>